<proteinExistence type="inferred from homology"/>
<feature type="chain" id="PRO_1000129035" description="Peptidase T">
    <location>
        <begin position="1"/>
        <end position="413"/>
    </location>
</feature>
<feature type="active site" evidence="1">
    <location>
        <position position="86"/>
    </location>
</feature>
<feature type="active site" description="Proton acceptor" evidence="1">
    <location>
        <position position="180"/>
    </location>
</feature>
<feature type="binding site" evidence="1">
    <location>
        <position position="84"/>
    </location>
    <ligand>
        <name>Zn(2+)</name>
        <dbReference type="ChEBI" id="CHEBI:29105"/>
        <label>1</label>
    </ligand>
</feature>
<feature type="binding site" evidence="1">
    <location>
        <position position="146"/>
    </location>
    <ligand>
        <name>Zn(2+)</name>
        <dbReference type="ChEBI" id="CHEBI:29105"/>
        <label>1</label>
    </ligand>
</feature>
<feature type="binding site" evidence="1">
    <location>
        <position position="146"/>
    </location>
    <ligand>
        <name>Zn(2+)</name>
        <dbReference type="ChEBI" id="CHEBI:29105"/>
        <label>2</label>
    </ligand>
</feature>
<feature type="binding site" evidence="1">
    <location>
        <position position="181"/>
    </location>
    <ligand>
        <name>Zn(2+)</name>
        <dbReference type="ChEBI" id="CHEBI:29105"/>
        <label>2</label>
    </ligand>
</feature>
<feature type="binding site" evidence="1">
    <location>
        <position position="203"/>
    </location>
    <ligand>
        <name>Zn(2+)</name>
        <dbReference type="ChEBI" id="CHEBI:29105"/>
        <label>1</label>
    </ligand>
</feature>
<feature type="binding site" evidence="1">
    <location>
        <position position="385"/>
    </location>
    <ligand>
        <name>Zn(2+)</name>
        <dbReference type="ChEBI" id="CHEBI:29105"/>
        <label>2</label>
    </ligand>
</feature>
<gene>
    <name evidence="1" type="primary">pepT</name>
    <name type="ordered locus">LAF_0865</name>
</gene>
<name>PEPT_LIMF3</name>
<keyword id="KW-0031">Aminopeptidase</keyword>
<keyword id="KW-0963">Cytoplasm</keyword>
<keyword id="KW-0378">Hydrolase</keyword>
<keyword id="KW-0479">Metal-binding</keyword>
<keyword id="KW-0482">Metalloprotease</keyword>
<keyword id="KW-0645">Protease</keyword>
<keyword id="KW-1185">Reference proteome</keyword>
<keyword id="KW-0862">Zinc</keyword>
<accession>B2GC19</accession>
<protein>
    <recommendedName>
        <fullName evidence="1">Peptidase T</fullName>
        <ecNumber evidence="1">3.4.11.4</ecNumber>
    </recommendedName>
    <alternativeName>
        <fullName evidence="1">Aminotripeptidase</fullName>
        <shortName evidence="1">Tripeptidase</shortName>
    </alternativeName>
    <alternativeName>
        <fullName evidence="1">Tripeptide aminopeptidase</fullName>
    </alternativeName>
</protein>
<dbReference type="EC" id="3.4.11.4" evidence="1"/>
<dbReference type="EMBL" id="AP008937">
    <property type="protein sequence ID" value="BAG27201.1"/>
    <property type="molecule type" value="Genomic_DNA"/>
</dbReference>
<dbReference type="RefSeq" id="WP_003683215.1">
    <property type="nucleotide sequence ID" value="NC_010610.1"/>
</dbReference>
<dbReference type="SMR" id="B2GC19"/>
<dbReference type="KEGG" id="lfe:LAF_0865"/>
<dbReference type="eggNOG" id="COG2195">
    <property type="taxonomic scope" value="Bacteria"/>
</dbReference>
<dbReference type="HOGENOM" id="CLU_053676_0_0_9"/>
<dbReference type="Proteomes" id="UP000001697">
    <property type="component" value="Chromosome"/>
</dbReference>
<dbReference type="GO" id="GO:0005829">
    <property type="term" value="C:cytosol"/>
    <property type="evidence" value="ECO:0007669"/>
    <property type="project" value="TreeGrafter"/>
</dbReference>
<dbReference type="GO" id="GO:0008237">
    <property type="term" value="F:metallopeptidase activity"/>
    <property type="evidence" value="ECO:0007669"/>
    <property type="project" value="UniProtKB-KW"/>
</dbReference>
<dbReference type="GO" id="GO:0045148">
    <property type="term" value="F:tripeptide aminopeptidase activity"/>
    <property type="evidence" value="ECO:0007669"/>
    <property type="project" value="UniProtKB-UniRule"/>
</dbReference>
<dbReference type="GO" id="GO:0008270">
    <property type="term" value="F:zinc ion binding"/>
    <property type="evidence" value="ECO:0007669"/>
    <property type="project" value="UniProtKB-UniRule"/>
</dbReference>
<dbReference type="GO" id="GO:0043171">
    <property type="term" value="P:peptide catabolic process"/>
    <property type="evidence" value="ECO:0007669"/>
    <property type="project" value="UniProtKB-UniRule"/>
</dbReference>
<dbReference type="GO" id="GO:0006508">
    <property type="term" value="P:proteolysis"/>
    <property type="evidence" value="ECO:0007669"/>
    <property type="project" value="UniProtKB-UniRule"/>
</dbReference>
<dbReference type="CDD" id="cd03892">
    <property type="entry name" value="M20_peptT"/>
    <property type="match status" value="1"/>
</dbReference>
<dbReference type="Gene3D" id="3.30.70.360">
    <property type="match status" value="1"/>
</dbReference>
<dbReference type="Gene3D" id="3.40.630.10">
    <property type="entry name" value="Zn peptidases"/>
    <property type="match status" value="1"/>
</dbReference>
<dbReference type="HAMAP" id="MF_00550">
    <property type="entry name" value="Aminopeptidase_M20"/>
    <property type="match status" value="1"/>
</dbReference>
<dbReference type="InterPro" id="IPR001261">
    <property type="entry name" value="ArgE/DapE_CS"/>
</dbReference>
<dbReference type="InterPro" id="IPR036264">
    <property type="entry name" value="Bact_exopeptidase_dim_dom"/>
</dbReference>
<dbReference type="InterPro" id="IPR002933">
    <property type="entry name" value="Peptidase_M20"/>
</dbReference>
<dbReference type="InterPro" id="IPR011650">
    <property type="entry name" value="Peptidase_M20_dimer"/>
</dbReference>
<dbReference type="InterPro" id="IPR010161">
    <property type="entry name" value="Peptidase_M20B"/>
</dbReference>
<dbReference type="NCBIfam" id="TIGR01882">
    <property type="entry name" value="peptidase-T"/>
    <property type="match status" value="1"/>
</dbReference>
<dbReference type="NCBIfam" id="NF003976">
    <property type="entry name" value="PRK05469.1"/>
    <property type="match status" value="1"/>
</dbReference>
<dbReference type="NCBIfam" id="NF009920">
    <property type="entry name" value="PRK13381.1"/>
    <property type="match status" value="1"/>
</dbReference>
<dbReference type="PANTHER" id="PTHR42994">
    <property type="entry name" value="PEPTIDASE T"/>
    <property type="match status" value="1"/>
</dbReference>
<dbReference type="PANTHER" id="PTHR42994:SF1">
    <property type="entry name" value="PEPTIDASE T"/>
    <property type="match status" value="1"/>
</dbReference>
<dbReference type="Pfam" id="PF07687">
    <property type="entry name" value="M20_dimer"/>
    <property type="match status" value="1"/>
</dbReference>
<dbReference type="Pfam" id="PF01546">
    <property type="entry name" value="Peptidase_M20"/>
    <property type="match status" value="1"/>
</dbReference>
<dbReference type="PIRSF" id="PIRSF037215">
    <property type="entry name" value="Peptidase_M20B"/>
    <property type="match status" value="1"/>
</dbReference>
<dbReference type="SUPFAM" id="SSF55031">
    <property type="entry name" value="Bacterial exopeptidase dimerisation domain"/>
    <property type="match status" value="1"/>
</dbReference>
<dbReference type="SUPFAM" id="SSF53187">
    <property type="entry name" value="Zn-dependent exopeptidases"/>
    <property type="match status" value="1"/>
</dbReference>
<dbReference type="PROSITE" id="PS00759">
    <property type="entry name" value="ARGE_DAPE_CPG2_2"/>
    <property type="match status" value="1"/>
</dbReference>
<sequence>MTDSKYPGLLERFIKYAKVETRSDDQSKTVPSSPKETAFLKQLAAELTELGLENVRIHPQNSYLLATIPANIDRPVPVMGLLAHVDTADFNAENVNPQVVEDYDGQSDIPLGDSGYKLTIDEFPSLKKYAGQTLVTTDGTTLLGADDKAGVAEIITLAAYLKEHPEIKHGQIQIGLGPDEEIGTGADHFDVKDFGADFAYTIDGGPLGELEDETFNAAQAEIDIQGKDVHTGTAKDTMVNAIQVGIDLQNQLPVHDRPEKTADREGFYHLYKFDGTVDHARLVYLIRDHDKKLFEARKEALRAIVRDLNANLGEDRISLNLYDQYYNLKDALKGHEDVVELAKKAMEDLGIKPDIYPVRGGTDGSTISYLGLPTPNLFAGGENMHSRFEYVSVQTMEKAVDVLLKMIALNAEE</sequence>
<reference key="1">
    <citation type="journal article" date="2008" name="DNA Res.">
        <title>Comparative genome analysis of Lactobacillus reuteri and Lactobacillus fermentum reveal a genomic island for reuterin and cobalamin production.</title>
        <authorList>
            <person name="Morita H."/>
            <person name="Toh H."/>
            <person name="Fukuda S."/>
            <person name="Horikawa H."/>
            <person name="Oshima K."/>
            <person name="Suzuki T."/>
            <person name="Murakami M."/>
            <person name="Hisamatsu S."/>
            <person name="Kato Y."/>
            <person name="Takizawa T."/>
            <person name="Fukuoka H."/>
            <person name="Yoshimura T."/>
            <person name="Itoh K."/>
            <person name="O'Sullivan D.J."/>
            <person name="McKay L.L."/>
            <person name="Ohno H."/>
            <person name="Kikuchi J."/>
            <person name="Masaoka T."/>
            <person name="Hattori M."/>
        </authorList>
    </citation>
    <scope>NUCLEOTIDE SEQUENCE [LARGE SCALE GENOMIC DNA]</scope>
    <source>
        <strain>NBRC 3956 / LMG 18251</strain>
    </source>
</reference>
<organism>
    <name type="scientific">Limosilactobacillus fermentum (strain NBRC 3956 / LMG 18251)</name>
    <name type="common">Lactobacillus fermentum</name>
    <dbReference type="NCBI Taxonomy" id="334390"/>
    <lineage>
        <taxon>Bacteria</taxon>
        <taxon>Bacillati</taxon>
        <taxon>Bacillota</taxon>
        <taxon>Bacilli</taxon>
        <taxon>Lactobacillales</taxon>
        <taxon>Lactobacillaceae</taxon>
        <taxon>Limosilactobacillus</taxon>
    </lineage>
</organism>
<evidence type="ECO:0000255" key="1">
    <source>
        <dbReference type="HAMAP-Rule" id="MF_00550"/>
    </source>
</evidence>
<comment type="function">
    <text evidence="1">Cleaves the N-terminal amino acid of tripeptides.</text>
</comment>
<comment type="catalytic activity">
    <reaction evidence="1">
        <text>Release of the N-terminal residue from a tripeptide.</text>
        <dbReference type="EC" id="3.4.11.4"/>
    </reaction>
</comment>
<comment type="cofactor">
    <cofactor evidence="1">
        <name>Zn(2+)</name>
        <dbReference type="ChEBI" id="CHEBI:29105"/>
    </cofactor>
    <text evidence="1">Binds 2 Zn(2+) ions per subunit.</text>
</comment>
<comment type="subcellular location">
    <subcellularLocation>
        <location evidence="1">Cytoplasm</location>
    </subcellularLocation>
</comment>
<comment type="similarity">
    <text evidence="1">Belongs to the peptidase M20B family.</text>
</comment>